<comment type="cofactor">
    <cofactor evidence="1">
        <name>Mg(2+)</name>
        <dbReference type="ChEBI" id="CHEBI:18420"/>
    </cofactor>
    <cofactor evidence="1">
        <name>Mn(2+)</name>
        <dbReference type="ChEBI" id="CHEBI:29035"/>
    </cofactor>
    <text evidence="1">Binds 2 magnesium or manganese ions per subunit.</text>
</comment>
<comment type="similarity">
    <text evidence="1">Belongs to the RimK family.</text>
</comment>
<evidence type="ECO:0000255" key="1">
    <source>
        <dbReference type="HAMAP-Rule" id="MF_01552"/>
    </source>
</evidence>
<gene>
    <name evidence="1" type="primary">rimK</name>
    <name type="ordered locus">lpp0481</name>
</gene>
<accession>Q5X7X4</accession>
<protein>
    <recommendedName>
        <fullName evidence="1">Probable alpha-L-glutamate ligase</fullName>
        <ecNumber evidence="1">6.3.2.-</ecNumber>
    </recommendedName>
</protein>
<sequence length="302" mass="32881">MKIAILATNPHLYSHKRLKAEAEAAGHEVKIINPLYCYMNVAASNPKVHYRGGAPLPHFDAVIPRIGASITYYGTAVLRHMETMGMYTLNESIAISRSRDKFRSLQLLARKGIPMPLTSFAQSPDDTEDLIHMVGGAPLVIKLLEGTQGKGVILADSHQSAVSIINAFKEMHANILVQEFIEESRGTDIRCFVIGEKVVAAVKRQAKDGEFRANVHQGGKAVKVKLSPQERAIAVSAAKTMGLRVAGVDLIRSNHGPLVLEINSSPGLEGIEKATNINLAGKIIEYIEKKAKPISSNHRFHG</sequence>
<dbReference type="EC" id="6.3.2.-" evidence="1"/>
<dbReference type="EMBL" id="CR628336">
    <property type="protein sequence ID" value="CAH11629.1"/>
    <property type="molecule type" value="Genomic_DNA"/>
</dbReference>
<dbReference type="RefSeq" id="WP_010946163.1">
    <property type="nucleotide sequence ID" value="NC_006368.1"/>
</dbReference>
<dbReference type="SMR" id="Q5X7X4"/>
<dbReference type="GeneID" id="57034418"/>
<dbReference type="KEGG" id="lpp:lpp0481"/>
<dbReference type="LegioList" id="lpp0481"/>
<dbReference type="HOGENOM" id="CLU_054353_0_1_6"/>
<dbReference type="GO" id="GO:0005737">
    <property type="term" value="C:cytoplasm"/>
    <property type="evidence" value="ECO:0007669"/>
    <property type="project" value="TreeGrafter"/>
</dbReference>
<dbReference type="GO" id="GO:0005524">
    <property type="term" value="F:ATP binding"/>
    <property type="evidence" value="ECO:0007669"/>
    <property type="project" value="UniProtKB-UniRule"/>
</dbReference>
<dbReference type="GO" id="GO:0046872">
    <property type="term" value="F:metal ion binding"/>
    <property type="evidence" value="ECO:0007669"/>
    <property type="project" value="UniProtKB-KW"/>
</dbReference>
<dbReference type="GO" id="GO:0018169">
    <property type="term" value="F:ribosomal S6-glutamic acid ligase activity"/>
    <property type="evidence" value="ECO:0007669"/>
    <property type="project" value="TreeGrafter"/>
</dbReference>
<dbReference type="GO" id="GO:0036211">
    <property type="term" value="P:protein modification process"/>
    <property type="evidence" value="ECO:0007669"/>
    <property type="project" value="InterPro"/>
</dbReference>
<dbReference type="GO" id="GO:0009432">
    <property type="term" value="P:SOS response"/>
    <property type="evidence" value="ECO:0007669"/>
    <property type="project" value="TreeGrafter"/>
</dbReference>
<dbReference type="GO" id="GO:0006412">
    <property type="term" value="P:translation"/>
    <property type="evidence" value="ECO:0007669"/>
    <property type="project" value="UniProtKB-KW"/>
</dbReference>
<dbReference type="FunFam" id="3.30.470.20:FF:000058">
    <property type="entry name" value="Alpha-aminoadipate--LysW ligase LysX protein"/>
    <property type="match status" value="1"/>
</dbReference>
<dbReference type="FunFam" id="3.30.1490.20:FF:000005">
    <property type="entry name" value="Probable alpha-L-glutamate ligase 1"/>
    <property type="match status" value="1"/>
</dbReference>
<dbReference type="Gene3D" id="3.40.50.20">
    <property type="match status" value="1"/>
</dbReference>
<dbReference type="Gene3D" id="3.30.1490.20">
    <property type="entry name" value="ATP-grasp fold, A domain"/>
    <property type="match status" value="1"/>
</dbReference>
<dbReference type="Gene3D" id="3.30.470.20">
    <property type="entry name" value="ATP-grasp fold, B domain"/>
    <property type="match status" value="1"/>
</dbReference>
<dbReference type="HAMAP" id="MF_01552">
    <property type="entry name" value="RimK"/>
    <property type="match status" value="1"/>
</dbReference>
<dbReference type="InterPro" id="IPR011761">
    <property type="entry name" value="ATP-grasp"/>
</dbReference>
<dbReference type="InterPro" id="IPR013651">
    <property type="entry name" value="ATP-grasp_RimK-type"/>
</dbReference>
<dbReference type="InterPro" id="IPR013815">
    <property type="entry name" value="ATP_grasp_subdomain_1"/>
</dbReference>
<dbReference type="InterPro" id="IPR023533">
    <property type="entry name" value="RimK"/>
</dbReference>
<dbReference type="InterPro" id="IPR041107">
    <property type="entry name" value="Rimk_N"/>
</dbReference>
<dbReference type="InterPro" id="IPR004666">
    <property type="entry name" value="Rp_bS6_RimK/Lys_biosynth_LsyX"/>
</dbReference>
<dbReference type="NCBIfam" id="NF007764">
    <property type="entry name" value="PRK10446.1"/>
    <property type="match status" value="1"/>
</dbReference>
<dbReference type="NCBIfam" id="TIGR00768">
    <property type="entry name" value="rimK_fam"/>
    <property type="match status" value="1"/>
</dbReference>
<dbReference type="PANTHER" id="PTHR21621:SF7">
    <property type="entry name" value="RIBOSOMAL PROTEIN BS6--L-GLUTAMATE LIGASE"/>
    <property type="match status" value="1"/>
</dbReference>
<dbReference type="PANTHER" id="PTHR21621">
    <property type="entry name" value="RIBOSOMAL PROTEIN S6 MODIFICATION PROTEIN"/>
    <property type="match status" value="1"/>
</dbReference>
<dbReference type="Pfam" id="PF08443">
    <property type="entry name" value="RimK"/>
    <property type="match status" value="1"/>
</dbReference>
<dbReference type="Pfam" id="PF18030">
    <property type="entry name" value="Rimk_N"/>
    <property type="match status" value="1"/>
</dbReference>
<dbReference type="SUPFAM" id="SSF56059">
    <property type="entry name" value="Glutathione synthetase ATP-binding domain-like"/>
    <property type="match status" value="1"/>
</dbReference>
<dbReference type="PROSITE" id="PS50975">
    <property type="entry name" value="ATP_GRASP"/>
    <property type="match status" value="1"/>
</dbReference>
<keyword id="KW-0067">ATP-binding</keyword>
<keyword id="KW-0436">Ligase</keyword>
<keyword id="KW-0460">Magnesium</keyword>
<keyword id="KW-0464">Manganese</keyword>
<keyword id="KW-0479">Metal-binding</keyword>
<keyword id="KW-0547">Nucleotide-binding</keyword>
<keyword id="KW-0648">Protein biosynthesis</keyword>
<reference key="1">
    <citation type="journal article" date="2004" name="Nat. Genet.">
        <title>Evidence in the Legionella pneumophila genome for exploitation of host cell functions and high genome plasticity.</title>
        <authorList>
            <person name="Cazalet C."/>
            <person name="Rusniok C."/>
            <person name="Brueggemann H."/>
            <person name="Zidane N."/>
            <person name="Magnier A."/>
            <person name="Ma L."/>
            <person name="Tichit M."/>
            <person name="Jarraud S."/>
            <person name="Bouchier C."/>
            <person name="Vandenesch F."/>
            <person name="Kunst F."/>
            <person name="Etienne J."/>
            <person name="Glaser P."/>
            <person name="Buchrieser C."/>
        </authorList>
    </citation>
    <scope>NUCLEOTIDE SEQUENCE [LARGE SCALE GENOMIC DNA]</scope>
    <source>
        <strain>Paris</strain>
    </source>
</reference>
<name>RIMK_LEGPA</name>
<organism>
    <name type="scientific">Legionella pneumophila (strain Paris)</name>
    <dbReference type="NCBI Taxonomy" id="297246"/>
    <lineage>
        <taxon>Bacteria</taxon>
        <taxon>Pseudomonadati</taxon>
        <taxon>Pseudomonadota</taxon>
        <taxon>Gammaproteobacteria</taxon>
        <taxon>Legionellales</taxon>
        <taxon>Legionellaceae</taxon>
        <taxon>Legionella</taxon>
    </lineage>
</organism>
<proteinExistence type="inferred from homology"/>
<feature type="chain" id="PRO_0000205463" description="Probable alpha-L-glutamate ligase">
    <location>
        <begin position="1"/>
        <end position="302"/>
    </location>
</feature>
<feature type="domain" description="ATP-grasp" evidence="1">
    <location>
        <begin position="105"/>
        <end position="288"/>
    </location>
</feature>
<feature type="binding site" evidence="1">
    <location>
        <position position="142"/>
    </location>
    <ligand>
        <name>ATP</name>
        <dbReference type="ChEBI" id="CHEBI:30616"/>
    </ligand>
</feature>
<feature type="binding site" evidence="1">
    <location>
        <begin position="179"/>
        <end position="180"/>
    </location>
    <ligand>
        <name>ATP</name>
        <dbReference type="ChEBI" id="CHEBI:30616"/>
    </ligand>
</feature>
<feature type="binding site" evidence="1">
    <location>
        <position position="188"/>
    </location>
    <ligand>
        <name>ATP</name>
        <dbReference type="ChEBI" id="CHEBI:30616"/>
    </ligand>
</feature>
<feature type="binding site" evidence="1">
    <location>
        <begin position="212"/>
        <end position="214"/>
    </location>
    <ligand>
        <name>ATP</name>
        <dbReference type="ChEBI" id="CHEBI:30616"/>
    </ligand>
</feature>
<feature type="binding site" evidence="1">
    <location>
        <position position="249"/>
    </location>
    <ligand>
        <name>Mg(2+)</name>
        <dbReference type="ChEBI" id="CHEBI:18420"/>
        <label>1</label>
    </ligand>
</feature>
<feature type="binding site" evidence="1">
    <location>
        <position position="249"/>
    </location>
    <ligand>
        <name>Mn(2+)</name>
        <dbReference type="ChEBI" id="CHEBI:29035"/>
        <label>1</label>
    </ligand>
</feature>
<feature type="binding site" evidence="1">
    <location>
        <position position="261"/>
    </location>
    <ligand>
        <name>Mg(2+)</name>
        <dbReference type="ChEBI" id="CHEBI:18420"/>
        <label>1</label>
    </ligand>
</feature>
<feature type="binding site" evidence="1">
    <location>
        <position position="261"/>
    </location>
    <ligand>
        <name>Mg(2+)</name>
        <dbReference type="ChEBI" id="CHEBI:18420"/>
        <label>2</label>
    </ligand>
</feature>
<feature type="binding site" evidence="1">
    <location>
        <position position="261"/>
    </location>
    <ligand>
        <name>Mn(2+)</name>
        <dbReference type="ChEBI" id="CHEBI:29035"/>
        <label>1</label>
    </ligand>
</feature>
<feature type="binding site" evidence="1">
    <location>
        <position position="261"/>
    </location>
    <ligand>
        <name>Mn(2+)</name>
        <dbReference type="ChEBI" id="CHEBI:29035"/>
        <label>2</label>
    </ligand>
</feature>
<feature type="binding site" evidence="1">
    <location>
        <position position="263"/>
    </location>
    <ligand>
        <name>Mg(2+)</name>
        <dbReference type="ChEBI" id="CHEBI:18420"/>
        <label>2</label>
    </ligand>
</feature>
<feature type="binding site" evidence="1">
    <location>
        <position position="263"/>
    </location>
    <ligand>
        <name>Mn(2+)</name>
        <dbReference type="ChEBI" id="CHEBI:29035"/>
        <label>2</label>
    </ligand>
</feature>